<protein>
    <recommendedName>
        <fullName>P2X purinoceptor 6</fullName>
        <shortName>P2X6</shortName>
    </recommendedName>
    <alternativeName>
        <fullName>ATP receptor</fullName>
    </alternativeName>
    <alternativeName>
        <fullName>P2XM</fullName>
    </alternativeName>
    <alternativeName>
        <fullName>Purinergic receptor</fullName>
    </alternativeName>
    <alternativeName>
        <fullName>Purinergic receptor P2X-like 1</fullName>
    </alternativeName>
</protein>
<sequence>MQLQPAGTGNMASAAAAALVSWGFLDYKTEKYVLTRNCRVGVSQRLLQLAVVVYVIGWALLAKKGYQERDLAPQTSVITKLKGVSVTQVKELENRLWDVADFVKPSQGENVFFLVTNFLVTPAQVQGRCPEHPSVPLANCWADEDCPEGETGTYSHGIKTGQCVVFNGTHRTCEIWSWCPVESGAVPRKPLLAQAKNFTLFIKNTVTFSKFNFSRSNALLTWDNTYFKHCLYDPLSSPYCPVFRIGDLVAMAGGDFEDLALLGGAVGISIHWDCNLDTKGSDCCPQYSFQLQQKGYNFRTANHWWAASGVETRSLLKLYGIRFDILVTGQAGKFALIPTAITVGTGAAWLGMVTFLCDLLLLYVDREAGFYWRTKYEEARAPKTTTNSS</sequence>
<feature type="chain" id="PRO_0000161558" description="P2X purinoceptor 6">
    <location>
        <begin position="1"/>
        <end position="389"/>
    </location>
</feature>
<feature type="topological domain" description="Cytoplasmic" evidence="5">
    <location>
        <begin position="1"/>
        <end position="45"/>
    </location>
</feature>
<feature type="transmembrane region" description="Helical; Name=1" evidence="5">
    <location>
        <begin position="46"/>
        <end position="66"/>
    </location>
</feature>
<feature type="topological domain" description="Extracellular" evidence="5">
    <location>
        <begin position="67"/>
        <end position="335"/>
    </location>
</feature>
<feature type="transmembrane region" description="Helical; Name=2" evidence="5">
    <location>
        <begin position="336"/>
        <end position="356"/>
    </location>
</feature>
<feature type="topological domain" description="Cytoplasmic" evidence="5">
    <location>
        <begin position="357"/>
        <end position="389"/>
    </location>
</feature>
<feature type="glycosylation site" description="N-linked (GlcNAc...) asparagine" evidence="5">
    <location>
        <position position="167"/>
    </location>
</feature>
<feature type="glycosylation site" description="N-linked (GlcNAc...) asparagine" evidence="5">
    <location>
        <position position="197"/>
    </location>
</feature>
<feature type="glycosylation site" description="N-linked (GlcNAc...) asparagine" evidence="5">
    <location>
        <position position="212"/>
    </location>
</feature>
<feature type="disulfide bond" evidence="1">
    <location>
        <begin position="129"/>
        <end position="179"/>
    </location>
</feature>
<feature type="disulfide bond" evidence="1">
    <location>
        <begin position="140"/>
        <end position="163"/>
    </location>
</feature>
<feature type="disulfide bond" evidence="1">
    <location>
        <begin position="146"/>
        <end position="173"/>
    </location>
</feature>
<feature type="disulfide bond" evidence="1">
    <location>
        <begin position="230"/>
        <end position="240"/>
    </location>
</feature>
<feature type="disulfide bond" evidence="1">
    <location>
        <begin position="274"/>
        <end position="283"/>
    </location>
</feature>
<feature type="sequence conflict" description="In Ref. 1; BAA24693." evidence="8" ref="1">
    <original>S</original>
    <variation>T</variation>
    <location>
        <position position="269"/>
    </location>
</feature>
<comment type="function">
    <text evidence="2 4 6">Acts as a modulatory subunit rather than a functional channel. Unlike other P2XRs members, P2RX6 does not seem to form functional homotrimers (By similarity). P2RX6 requires the presence of P2RX4 or P2RX2 to form functional heterotrimeric receptors at the plasma membrane (By similarity). P2RX6 can be translocated to the nucleus, where it interacts with the splicing factor (SF3A1), to reduce the incidence of mRNA splicing. May function as a nuclear regulator of post-transcriptional modifications in neurons (PubMed:25874565).</text>
</comment>
<comment type="catalytic activity">
    <reaction evidence="2">
        <text>Ca(2+)(in) = Ca(2+)(out)</text>
        <dbReference type="Rhea" id="RHEA:29671"/>
        <dbReference type="ChEBI" id="CHEBI:29108"/>
    </reaction>
</comment>
<comment type="subunit">
    <text evidence="4 6">Unlike most P2RXs, P2RX6 does not seem to form homotrimers (By similarity). P2RX6 are likely to form as obligate heteromers with other P2RXs subunits. Forms heterotrimer with P2RX2 with a variable subunit stoichiometry determined by subunit expression levels (By similarity). Forms heterotrimer with P2RX4; functional differences between homomeric P2RX4 and P2RX4/6 heterotrimer are minor (By similarity). Forms a P2RX2/P2RX4/P2RX6 heterotrimer (By similarity). Interacts with SF3A1; resulting in a reduction of the splicing activity (PubMed:25874565).</text>
</comment>
<comment type="subcellular location">
    <subcellularLocation>
        <location evidence="2">Cell membrane</location>
        <topology evidence="5">Multi-pass membrane protein</topology>
    </subcellularLocation>
    <subcellularLocation>
        <location evidence="4">Endoplasmic reticulum</location>
    </subcellularLocation>
    <subcellularLocation>
        <location evidence="6">Nucleus</location>
    </subcellularLocation>
    <subcellularLocation>
        <location evidence="6">Nucleus inner membrane</location>
        <topology evidence="5">Multi-pass membrane protein</topology>
    </subcellularLocation>
    <text evidence="4">Monomers remain anchored to the endoplasmic reticulum (ER) membrane by the hydrophobic N-terminal end. The retention of P2RX6 subunit in the ER allows it to reach the nucleus. Heteromerization of P2RX6 subunits with either P2RX2 or P2RX4 subunits guides the P2RX6 subunit to the plasma membrane. In neurons, mainly expressed in the cell body of the hippocampal neurons.</text>
</comment>
<comment type="tissue specificity">
    <text>Predominantly expressed in skeletal muscle. Also expressed in lung.</text>
</comment>
<comment type="domain">
    <text evidence="4">An uncharged region within the N terminus of the P2RX6 subunit inhibits its assembly and exit from the endoplasmic reticulum.</text>
</comment>
<comment type="domain">
    <text evidence="3">The P2RX6 subunit lacks nine residues in the left flipper, a flexible loop structure, which is a key element in the activation of P2RXs.</text>
</comment>
<comment type="PTM">
    <text evidence="4">N-glycosylated. N-linked glycosylation can affect trafficking to the membrane and function.</text>
</comment>
<comment type="disruption phenotype">
    <text evidence="7">P2rx6 null mice exhibit an apparent normal physiological behavior, weight, food or water intake. No significant changes in serum concentrations or urinary excretion are observed for Na(+), K(+), Ca(2+) and Mg(2+) in these mice.</text>
</comment>
<comment type="similarity">
    <text evidence="8">Belongs to the P2X receptor family.</text>
</comment>
<comment type="sequence caution" evidence="8">
    <conflict type="erroneous initiation">
        <sequence resource="EMBL-CDS" id="BAA24693"/>
    </conflict>
    <text>Truncated N-terminus.</text>
</comment>
<comment type="sequence caution" evidence="8">
    <conflict type="erroneous initiation">
        <sequence resource="EMBL-CDS" id="BAE23697"/>
    </conflict>
    <text>Truncated N-terminus.</text>
</comment>
<organism>
    <name type="scientific">Mus musculus</name>
    <name type="common">Mouse</name>
    <dbReference type="NCBI Taxonomy" id="10090"/>
    <lineage>
        <taxon>Eukaryota</taxon>
        <taxon>Metazoa</taxon>
        <taxon>Chordata</taxon>
        <taxon>Craniata</taxon>
        <taxon>Vertebrata</taxon>
        <taxon>Euteleostomi</taxon>
        <taxon>Mammalia</taxon>
        <taxon>Eutheria</taxon>
        <taxon>Euarchontoglires</taxon>
        <taxon>Glires</taxon>
        <taxon>Rodentia</taxon>
        <taxon>Myomorpha</taxon>
        <taxon>Muroidea</taxon>
        <taxon>Muridae</taxon>
        <taxon>Murinae</taxon>
        <taxon>Mus</taxon>
        <taxon>Mus</taxon>
    </lineage>
</organism>
<name>P2RX6_MOUSE</name>
<keyword id="KW-1003">Cell membrane</keyword>
<keyword id="KW-1015">Disulfide bond</keyword>
<keyword id="KW-0256">Endoplasmic reticulum</keyword>
<keyword id="KW-0325">Glycoprotein</keyword>
<keyword id="KW-0407">Ion channel</keyword>
<keyword id="KW-0406">Ion transport</keyword>
<keyword id="KW-1071">Ligand-gated ion channel</keyword>
<keyword id="KW-0472">Membrane</keyword>
<keyword id="KW-0539">Nucleus</keyword>
<keyword id="KW-0675">Receptor</keyword>
<keyword id="KW-1185">Reference proteome</keyword>
<keyword id="KW-0812">Transmembrane</keyword>
<keyword id="KW-1133">Transmembrane helix</keyword>
<keyword id="KW-0813">Transport</keyword>
<proteinExistence type="evidence at protein level"/>
<evidence type="ECO:0000250" key="1">
    <source>
        <dbReference type="UniProtKB" id="F8W463"/>
    </source>
</evidence>
<evidence type="ECO:0000250" key="2">
    <source>
        <dbReference type="UniProtKB" id="O15547"/>
    </source>
</evidence>
<evidence type="ECO:0000250" key="3">
    <source>
        <dbReference type="UniProtKB" id="P51577"/>
    </source>
</evidence>
<evidence type="ECO:0000250" key="4">
    <source>
        <dbReference type="UniProtKB" id="P51579"/>
    </source>
</evidence>
<evidence type="ECO:0000255" key="5"/>
<evidence type="ECO:0000269" key="6">
    <source>
    </source>
</evidence>
<evidence type="ECO:0000269" key="7">
    <source>
    </source>
</evidence>
<evidence type="ECO:0000305" key="8"/>
<dbReference type="EMBL" id="AB010883">
    <property type="protein sequence ID" value="BAA24693.1"/>
    <property type="status" value="ALT_INIT"/>
    <property type="molecule type" value="mRNA"/>
</dbReference>
<dbReference type="EMBL" id="AC115733">
    <property type="status" value="NOT_ANNOTATED_CDS"/>
    <property type="molecule type" value="Genomic_DNA"/>
</dbReference>
<dbReference type="EMBL" id="CH466521">
    <property type="protein sequence ID" value="EDK97466.1"/>
    <property type="molecule type" value="Genomic_DNA"/>
</dbReference>
<dbReference type="EMBL" id="AK138541">
    <property type="protein sequence ID" value="BAE23697.1"/>
    <property type="status" value="ALT_INIT"/>
    <property type="molecule type" value="mRNA"/>
</dbReference>
<dbReference type="CCDS" id="CCDS28007.2"/>
<dbReference type="RefSeq" id="NP_001153033.1">
    <property type="nucleotide sequence ID" value="NM_001159561.1"/>
</dbReference>
<dbReference type="RefSeq" id="NP_035158.2">
    <property type="nucleotide sequence ID" value="NM_011028.2"/>
</dbReference>
<dbReference type="SMR" id="O54803"/>
<dbReference type="FunCoup" id="O54803">
    <property type="interactions" value="549"/>
</dbReference>
<dbReference type="STRING" id="10090.ENSMUSP00000023441"/>
<dbReference type="GlyCosmos" id="O54803">
    <property type="glycosylation" value="3 sites, No reported glycans"/>
</dbReference>
<dbReference type="GlyGen" id="O54803">
    <property type="glycosylation" value="4 sites, 1 N-linked glycan (1 site)"/>
</dbReference>
<dbReference type="iPTMnet" id="O54803"/>
<dbReference type="PhosphoSitePlus" id="O54803"/>
<dbReference type="PaxDb" id="10090-ENSMUSP00000023441"/>
<dbReference type="ProteomicsDB" id="287748"/>
<dbReference type="Antibodypedia" id="8429">
    <property type="antibodies" value="153 antibodies from 24 providers"/>
</dbReference>
<dbReference type="DNASU" id="18440"/>
<dbReference type="Ensembl" id="ENSMUST00000023441.11">
    <property type="protein sequence ID" value="ENSMUSP00000023441.5"/>
    <property type="gene ID" value="ENSMUSG00000022758.15"/>
</dbReference>
<dbReference type="GeneID" id="18440"/>
<dbReference type="KEGG" id="mmu:18440"/>
<dbReference type="UCSC" id="uc007yli.2">
    <property type="organism name" value="mouse"/>
</dbReference>
<dbReference type="AGR" id="MGI:1337113"/>
<dbReference type="CTD" id="9127"/>
<dbReference type="MGI" id="MGI:1337113">
    <property type="gene designation" value="P2rx6"/>
</dbReference>
<dbReference type="VEuPathDB" id="HostDB:ENSMUSG00000022758"/>
<dbReference type="eggNOG" id="ENOG502R480">
    <property type="taxonomic scope" value="Eukaryota"/>
</dbReference>
<dbReference type="GeneTree" id="ENSGT01020000230351"/>
<dbReference type="InParanoid" id="O54803"/>
<dbReference type="OMA" id="ATMVCDL"/>
<dbReference type="OrthoDB" id="494673at2759"/>
<dbReference type="TreeFam" id="TF328633"/>
<dbReference type="Reactome" id="R-MMU-139853">
    <property type="pathway name" value="Elevation of cytosolic Ca2+ levels"/>
</dbReference>
<dbReference type="Reactome" id="R-MMU-418346">
    <property type="pathway name" value="Platelet homeostasis"/>
</dbReference>
<dbReference type="BioGRID-ORCS" id="18440">
    <property type="hits" value="3 hits in 79 CRISPR screens"/>
</dbReference>
<dbReference type="PRO" id="PR:O54803"/>
<dbReference type="Proteomes" id="UP000000589">
    <property type="component" value="Chromosome 16"/>
</dbReference>
<dbReference type="RNAct" id="O54803">
    <property type="molecule type" value="protein"/>
</dbReference>
<dbReference type="Bgee" id="ENSMUSG00000022758">
    <property type="expression patterns" value="Expressed in facial nucleus and 93 other cell types or tissues"/>
</dbReference>
<dbReference type="ExpressionAtlas" id="O54803">
    <property type="expression patterns" value="baseline and differential"/>
</dbReference>
<dbReference type="GO" id="GO:0043197">
    <property type="term" value="C:dendritic spine"/>
    <property type="evidence" value="ECO:0007669"/>
    <property type="project" value="Ensembl"/>
</dbReference>
<dbReference type="GO" id="GO:0005789">
    <property type="term" value="C:endoplasmic reticulum membrane"/>
    <property type="evidence" value="ECO:0007669"/>
    <property type="project" value="Ensembl"/>
</dbReference>
<dbReference type="GO" id="GO:0098978">
    <property type="term" value="C:glutamatergic synapse"/>
    <property type="evidence" value="ECO:0007669"/>
    <property type="project" value="Ensembl"/>
</dbReference>
<dbReference type="GO" id="GO:0043025">
    <property type="term" value="C:neuronal cell body"/>
    <property type="evidence" value="ECO:0000314"/>
    <property type="project" value="UniProtKB"/>
</dbReference>
<dbReference type="GO" id="GO:0005637">
    <property type="term" value="C:nuclear inner membrane"/>
    <property type="evidence" value="ECO:0007669"/>
    <property type="project" value="UniProtKB-SubCell"/>
</dbReference>
<dbReference type="GO" id="GO:0005634">
    <property type="term" value="C:nucleus"/>
    <property type="evidence" value="ECO:0000314"/>
    <property type="project" value="UniProtKB"/>
</dbReference>
<dbReference type="GO" id="GO:0098688">
    <property type="term" value="C:parallel fiber to Purkinje cell synapse"/>
    <property type="evidence" value="ECO:0007669"/>
    <property type="project" value="Ensembl"/>
</dbReference>
<dbReference type="GO" id="GO:0005886">
    <property type="term" value="C:plasma membrane"/>
    <property type="evidence" value="ECO:0000250"/>
    <property type="project" value="MGI"/>
</dbReference>
<dbReference type="GO" id="GO:0099634">
    <property type="term" value="C:postsynaptic specialization membrane"/>
    <property type="evidence" value="ECO:0007669"/>
    <property type="project" value="Ensembl"/>
</dbReference>
<dbReference type="GO" id="GO:0043235">
    <property type="term" value="C:receptor complex"/>
    <property type="evidence" value="ECO:0007669"/>
    <property type="project" value="Ensembl"/>
</dbReference>
<dbReference type="GO" id="GO:0005524">
    <property type="term" value="F:ATP binding"/>
    <property type="evidence" value="ECO:0007669"/>
    <property type="project" value="InterPro"/>
</dbReference>
<dbReference type="GO" id="GO:0004931">
    <property type="term" value="F:extracellularly ATP-gated monoatomic cation channel activity"/>
    <property type="evidence" value="ECO:0000304"/>
    <property type="project" value="MGI"/>
</dbReference>
<dbReference type="GO" id="GO:0044877">
    <property type="term" value="F:protein-containing complex binding"/>
    <property type="evidence" value="ECO:0007669"/>
    <property type="project" value="Ensembl"/>
</dbReference>
<dbReference type="GO" id="GO:0001614">
    <property type="term" value="F:purinergic nucleotide receptor activity"/>
    <property type="evidence" value="ECO:0007669"/>
    <property type="project" value="InterPro"/>
</dbReference>
<dbReference type="GO" id="GO:0033198">
    <property type="term" value="P:response to ATP"/>
    <property type="evidence" value="ECO:0007669"/>
    <property type="project" value="InterPro"/>
</dbReference>
<dbReference type="FunFam" id="2.60.490.10:FF:000001">
    <property type="entry name" value="P2X purinoceptor"/>
    <property type="match status" value="1"/>
</dbReference>
<dbReference type="Gene3D" id="1.10.287.940">
    <property type="entry name" value="atp-gated p2x4 ion channel"/>
    <property type="match status" value="1"/>
</dbReference>
<dbReference type="Gene3D" id="2.60.490.10">
    <property type="entry name" value="atp-gated p2x4 ion channel domain"/>
    <property type="match status" value="1"/>
</dbReference>
<dbReference type="InterPro" id="IPR003049">
    <property type="entry name" value="P2X6_purnocptor"/>
</dbReference>
<dbReference type="InterPro" id="IPR027309">
    <property type="entry name" value="P2X_extracellular_dom_sf"/>
</dbReference>
<dbReference type="InterPro" id="IPR001429">
    <property type="entry name" value="P2X_purnocptor"/>
</dbReference>
<dbReference type="InterPro" id="IPR053792">
    <property type="entry name" value="P2X_RECEPTOR_CS"/>
</dbReference>
<dbReference type="NCBIfam" id="TIGR00863">
    <property type="entry name" value="P2X"/>
    <property type="match status" value="1"/>
</dbReference>
<dbReference type="PANTHER" id="PTHR10125">
    <property type="entry name" value="P2X PURINOCEPTOR"/>
    <property type="match status" value="1"/>
</dbReference>
<dbReference type="PANTHER" id="PTHR10125:SF21">
    <property type="entry name" value="P2X PURINOCEPTOR 6"/>
    <property type="match status" value="1"/>
</dbReference>
<dbReference type="Pfam" id="PF00864">
    <property type="entry name" value="P2X_receptor"/>
    <property type="match status" value="1"/>
</dbReference>
<dbReference type="PIRSF" id="PIRSF005713">
    <property type="entry name" value="P2X_purinoceptor"/>
    <property type="match status" value="1"/>
</dbReference>
<dbReference type="PRINTS" id="PR01313">
    <property type="entry name" value="P2X6RECEPTOR"/>
</dbReference>
<dbReference type="PRINTS" id="PR01307">
    <property type="entry name" value="P2XRECEPTOR"/>
</dbReference>
<dbReference type="PROSITE" id="PS01212">
    <property type="entry name" value="P2X_RECEPTOR"/>
    <property type="match status" value="1"/>
</dbReference>
<gene>
    <name type="primary">P2rx6</name>
    <name type="synonym">P2rxl1</name>
</gene>
<reference key="1">
    <citation type="journal article" date="1998" name="J. Hum. Genet.">
        <title>Cloning and characterization of the murine P2XM receptor gene.</title>
        <authorList>
            <person name="Nawa G."/>
            <person name="Urano T."/>
            <person name="Tokino T."/>
            <person name="Ochi T."/>
            <person name="Miyoshi Y."/>
        </authorList>
    </citation>
    <scope>NUCLEOTIDE SEQUENCE [MRNA]</scope>
</reference>
<reference key="2">
    <citation type="journal article" date="2009" name="PLoS Biol.">
        <title>Lineage-specific biology revealed by a finished genome assembly of the mouse.</title>
        <authorList>
            <person name="Church D.M."/>
            <person name="Goodstadt L."/>
            <person name="Hillier L.W."/>
            <person name="Zody M.C."/>
            <person name="Goldstein S."/>
            <person name="She X."/>
            <person name="Bult C.J."/>
            <person name="Agarwala R."/>
            <person name="Cherry J.L."/>
            <person name="DiCuccio M."/>
            <person name="Hlavina W."/>
            <person name="Kapustin Y."/>
            <person name="Meric P."/>
            <person name="Maglott D."/>
            <person name="Birtle Z."/>
            <person name="Marques A.C."/>
            <person name="Graves T."/>
            <person name="Zhou S."/>
            <person name="Teague B."/>
            <person name="Potamousis K."/>
            <person name="Churas C."/>
            <person name="Place M."/>
            <person name="Herschleb J."/>
            <person name="Runnheim R."/>
            <person name="Forrest D."/>
            <person name="Amos-Landgraf J."/>
            <person name="Schwartz D.C."/>
            <person name="Cheng Z."/>
            <person name="Lindblad-Toh K."/>
            <person name="Eichler E.E."/>
            <person name="Ponting C.P."/>
        </authorList>
    </citation>
    <scope>NUCLEOTIDE SEQUENCE [LARGE SCALE GENOMIC DNA]</scope>
    <source>
        <strain>C57BL/6J</strain>
    </source>
</reference>
<reference key="3">
    <citation type="submission" date="2005-07" db="EMBL/GenBank/DDBJ databases">
        <authorList>
            <person name="Mural R.J."/>
            <person name="Adams M.D."/>
            <person name="Myers E.W."/>
            <person name="Smith H.O."/>
            <person name="Venter J.C."/>
        </authorList>
    </citation>
    <scope>NUCLEOTIDE SEQUENCE [LARGE SCALE GENOMIC DNA]</scope>
</reference>
<reference key="4">
    <citation type="journal article" date="2005" name="Science">
        <title>The transcriptional landscape of the mammalian genome.</title>
        <authorList>
            <person name="Carninci P."/>
            <person name="Kasukawa T."/>
            <person name="Katayama S."/>
            <person name="Gough J."/>
            <person name="Frith M.C."/>
            <person name="Maeda N."/>
            <person name="Oyama R."/>
            <person name="Ravasi T."/>
            <person name="Lenhard B."/>
            <person name="Wells C."/>
            <person name="Kodzius R."/>
            <person name="Shimokawa K."/>
            <person name="Bajic V.B."/>
            <person name="Brenner S.E."/>
            <person name="Batalov S."/>
            <person name="Forrest A.R."/>
            <person name="Zavolan M."/>
            <person name="Davis M.J."/>
            <person name="Wilming L.G."/>
            <person name="Aidinis V."/>
            <person name="Allen J.E."/>
            <person name="Ambesi-Impiombato A."/>
            <person name="Apweiler R."/>
            <person name="Aturaliya R.N."/>
            <person name="Bailey T.L."/>
            <person name="Bansal M."/>
            <person name="Baxter L."/>
            <person name="Beisel K.W."/>
            <person name="Bersano T."/>
            <person name="Bono H."/>
            <person name="Chalk A.M."/>
            <person name="Chiu K.P."/>
            <person name="Choudhary V."/>
            <person name="Christoffels A."/>
            <person name="Clutterbuck D.R."/>
            <person name="Crowe M.L."/>
            <person name="Dalla E."/>
            <person name="Dalrymple B.P."/>
            <person name="de Bono B."/>
            <person name="Della Gatta G."/>
            <person name="di Bernardo D."/>
            <person name="Down T."/>
            <person name="Engstrom P."/>
            <person name="Fagiolini M."/>
            <person name="Faulkner G."/>
            <person name="Fletcher C.F."/>
            <person name="Fukushima T."/>
            <person name="Furuno M."/>
            <person name="Futaki S."/>
            <person name="Gariboldi M."/>
            <person name="Georgii-Hemming P."/>
            <person name="Gingeras T.R."/>
            <person name="Gojobori T."/>
            <person name="Green R.E."/>
            <person name="Gustincich S."/>
            <person name="Harbers M."/>
            <person name="Hayashi Y."/>
            <person name="Hensch T.K."/>
            <person name="Hirokawa N."/>
            <person name="Hill D."/>
            <person name="Huminiecki L."/>
            <person name="Iacono M."/>
            <person name="Ikeo K."/>
            <person name="Iwama A."/>
            <person name="Ishikawa T."/>
            <person name="Jakt M."/>
            <person name="Kanapin A."/>
            <person name="Katoh M."/>
            <person name="Kawasawa Y."/>
            <person name="Kelso J."/>
            <person name="Kitamura H."/>
            <person name="Kitano H."/>
            <person name="Kollias G."/>
            <person name="Krishnan S.P."/>
            <person name="Kruger A."/>
            <person name="Kummerfeld S.K."/>
            <person name="Kurochkin I.V."/>
            <person name="Lareau L.F."/>
            <person name="Lazarevic D."/>
            <person name="Lipovich L."/>
            <person name="Liu J."/>
            <person name="Liuni S."/>
            <person name="McWilliam S."/>
            <person name="Madan Babu M."/>
            <person name="Madera M."/>
            <person name="Marchionni L."/>
            <person name="Matsuda H."/>
            <person name="Matsuzawa S."/>
            <person name="Miki H."/>
            <person name="Mignone F."/>
            <person name="Miyake S."/>
            <person name="Morris K."/>
            <person name="Mottagui-Tabar S."/>
            <person name="Mulder N."/>
            <person name="Nakano N."/>
            <person name="Nakauchi H."/>
            <person name="Ng P."/>
            <person name="Nilsson R."/>
            <person name="Nishiguchi S."/>
            <person name="Nishikawa S."/>
            <person name="Nori F."/>
            <person name="Ohara O."/>
            <person name="Okazaki Y."/>
            <person name="Orlando V."/>
            <person name="Pang K.C."/>
            <person name="Pavan W.J."/>
            <person name="Pavesi G."/>
            <person name="Pesole G."/>
            <person name="Petrovsky N."/>
            <person name="Piazza S."/>
            <person name="Reed J."/>
            <person name="Reid J.F."/>
            <person name="Ring B.Z."/>
            <person name="Ringwald M."/>
            <person name="Rost B."/>
            <person name="Ruan Y."/>
            <person name="Salzberg S.L."/>
            <person name="Sandelin A."/>
            <person name="Schneider C."/>
            <person name="Schoenbach C."/>
            <person name="Sekiguchi K."/>
            <person name="Semple C.A."/>
            <person name="Seno S."/>
            <person name="Sessa L."/>
            <person name="Sheng Y."/>
            <person name="Shibata Y."/>
            <person name="Shimada H."/>
            <person name="Shimada K."/>
            <person name="Silva D."/>
            <person name="Sinclair B."/>
            <person name="Sperling S."/>
            <person name="Stupka E."/>
            <person name="Sugiura K."/>
            <person name="Sultana R."/>
            <person name="Takenaka Y."/>
            <person name="Taki K."/>
            <person name="Tammoja K."/>
            <person name="Tan S.L."/>
            <person name="Tang S."/>
            <person name="Taylor M.S."/>
            <person name="Tegner J."/>
            <person name="Teichmann S.A."/>
            <person name="Ueda H.R."/>
            <person name="van Nimwegen E."/>
            <person name="Verardo R."/>
            <person name="Wei C.L."/>
            <person name="Yagi K."/>
            <person name="Yamanishi H."/>
            <person name="Zabarovsky E."/>
            <person name="Zhu S."/>
            <person name="Zimmer A."/>
            <person name="Hide W."/>
            <person name="Bult C."/>
            <person name="Grimmond S.M."/>
            <person name="Teasdale R.D."/>
            <person name="Liu E.T."/>
            <person name="Brusic V."/>
            <person name="Quackenbush J."/>
            <person name="Wahlestedt C."/>
            <person name="Mattick J.S."/>
            <person name="Hume D.A."/>
            <person name="Kai C."/>
            <person name="Sasaki D."/>
            <person name="Tomaru Y."/>
            <person name="Fukuda S."/>
            <person name="Kanamori-Katayama M."/>
            <person name="Suzuki M."/>
            <person name="Aoki J."/>
            <person name="Arakawa T."/>
            <person name="Iida J."/>
            <person name="Imamura K."/>
            <person name="Itoh M."/>
            <person name="Kato T."/>
            <person name="Kawaji H."/>
            <person name="Kawagashira N."/>
            <person name="Kawashima T."/>
            <person name="Kojima M."/>
            <person name="Kondo S."/>
            <person name="Konno H."/>
            <person name="Nakano K."/>
            <person name="Ninomiya N."/>
            <person name="Nishio T."/>
            <person name="Okada M."/>
            <person name="Plessy C."/>
            <person name="Shibata K."/>
            <person name="Shiraki T."/>
            <person name="Suzuki S."/>
            <person name="Tagami M."/>
            <person name="Waki K."/>
            <person name="Watahiki A."/>
            <person name="Okamura-Oho Y."/>
            <person name="Suzuki H."/>
            <person name="Kawai J."/>
            <person name="Hayashizaki Y."/>
        </authorList>
    </citation>
    <scope>NUCLEOTIDE SEQUENCE [LARGE SCALE MRNA] OF 8-389</scope>
    <source>
        <strain>C57BL/6J</strain>
        <tissue>Spinal cord</tissue>
    </source>
</reference>
<reference key="5">
    <citation type="journal article" date="2015" name="PLoS ONE">
        <title>Age-related nuclear translocation of P2X6 subunit modifies splicing activity interacting with splicing factor 3A1.</title>
        <authorList>
            <person name="Diaz-Hernandez J.I."/>
            <person name="Sebastian-Serrano A."/>
            <person name="Gomez-Villafuertes R."/>
            <person name="Diaz-Hernandez M."/>
            <person name="Miras-Portugal M.T."/>
        </authorList>
    </citation>
    <scope>FUNCTION</scope>
    <scope>SUBCELLULAR LOCATION</scope>
    <scope>INTERACTION WITH SF3A1</scope>
</reference>
<reference key="6">
    <citation type="journal article" date="2016" name="PLoS ONE">
        <title>P2X6 Knockout Mice Exhibit Normal Electrolyte Homeostasis.</title>
        <authorList>
            <person name="de Baaij J.H."/>
            <person name="Kompatscher A."/>
            <person name="Viering D.H."/>
            <person name="Bos C."/>
            <person name="Bindels R.J."/>
            <person name="Hoenderop J.G."/>
        </authorList>
    </citation>
    <scope>DISRUPTION PHENOTYPE</scope>
</reference>
<accession>O54803</accession>
<accession>G3X8W3</accession>
<accession>Q3UUD0</accession>